<organism>
    <name type="scientific">Bos taurus</name>
    <name type="common">Bovine</name>
    <dbReference type="NCBI Taxonomy" id="9913"/>
    <lineage>
        <taxon>Eukaryota</taxon>
        <taxon>Metazoa</taxon>
        <taxon>Chordata</taxon>
        <taxon>Craniata</taxon>
        <taxon>Vertebrata</taxon>
        <taxon>Euteleostomi</taxon>
        <taxon>Mammalia</taxon>
        <taxon>Eutheria</taxon>
        <taxon>Laurasiatheria</taxon>
        <taxon>Artiodactyla</taxon>
        <taxon>Ruminantia</taxon>
        <taxon>Pecora</taxon>
        <taxon>Bovidae</taxon>
        <taxon>Bovinae</taxon>
        <taxon>Bos</taxon>
    </lineage>
</organism>
<dbReference type="EMBL" id="AF492683">
    <property type="protein sequence ID" value="AAM46835.1"/>
    <property type="molecule type" value="mRNA"/>
</dbReference>
<dbReference type="EMBL" id="BC102635">
    <property type="protein sequence ID" value="AAI02636.1"/>
    <property type="molecule type" value="mRNA"/>
</dbReference>
<dbReference type="RefSeq" id="NP_776522.1">
    <property type="nucleotide sequence ID" value="NM_174097.2"/>
</dbReference>
<dbReference type="RefSeq" id="XP_005207997.1">
    <property type="nucleotide sequence ID" value="XM_005207940.4"/>
</dbReference>
<dbReference type="RefSeq" id="XP_005207998.1">
    <property type="nucleotide sequence ID" value="XM_005207941.5"/>
</dbReference>
<dbReference type="RefSeq" id="XP_005207999.1">
    <property type="nucleotide sequence ID" value="XM_005207942.4"/>
</dbReference>
<dbReference type="RefSeq" id="XP_005208000.1">
    <property type="nucleotide sequence ID" value="XM_005207943.4"/>
</dbReference>
<dbReference type="SMR" id="Q8MJD5"/>
<dbReference type="FunCoup" id="Q8MJD5">
    <property type="interactions" value="130"/>
</dbReference>
<dbReference type="STRING" id="9913.ENSBTAP00000003013"/>
<dbReference type="PaxDb" id="9913-ENSBTAP00000003013"/>
<dbReference type="Ensembl" id="ENSBTAT00000003013.4">
    <property type="protein sequence ID" value="ENSBTAP00000003013.3"/>
    <property type="gene ID" value="ENSBTAG00000002333.6"/>
</dbReference>
<dbReference type="GeneID" id="281270"/>
<dbReference type="KEGG" id="bta:281270"/>
<dbReference type="CTD" id="84525"/>
<dbReference type="VEuPathDB" id="HostDB:ENSBTAG00000002333"/>
<dbReference type="VGNC" id="VGNC:29907">
    <property type="gene designation" value="HOPX"/>
</dbReference>
<dbReference type="eggNOG" id="KOG0490">
    <property type="taxonomic scope" value="Eukaryota"/>
</dbReference>
<dbReference type="GeneTree" id="ENSGT00390000017143"/>
<dbReference type="HOGENOM" id="CLU_193231_0_0_1"/>
<dbReference type="InParanoid" id="Q8MJD5"/>
<dbReference type="OMA" id="LRMAKWR"/>
<dbReference type="OrthoDB" id="6159439at2759"/>
<dbReference type="TreeFam" id="TF330730"/>
<dbReference type="Proteomes" id="UP000009136">
    <property type="component" value="Chromosome 6"/>
</dbReference>
<dbReference type="Bgee" id="ENSBTAG00000002333">
    <property type="expression patterns" value="Expressed in thyroid gland and 104 other cell types or tissues"/>
</dbReference>
<dbReference type="GO" id="GO:0005737">
    <property type="term" value="C:cytoplasm"/>
    <property type="evidence" value="ECO:0007669"/>
    <property type="project" value="UniProtKB-SubCell"/>
</dbReference>
<dbReference type="GO" id="GO:0005634">
    <property type="term" value="C:nucleus"/>
    <property type="evidence" value="ECO:0000318"/>
    <property type="project" value="GO_Central"/>
</dbReference>
<dbReference type="GO" id="GO:0003677">
    <property type="term" value="F:DNA binding"/>
    <property type="evidence" value="ECO:0007669"/>
    <property type="project" value="UniProtKB-KW"/>
</dbReference>
<dbReference type="GO" id="GO:0035033">
    <property type="term" value="F:histone deacetylase regulator activity"/>
    <property type="evidence" value="ECO:0007669"/>
    <property type="project" value="Ensembl"/>
</dbReference>
<dbReference type="GO" id="GO:0051131">
    <property type="term" value="P:chaperone-mediated protein complex assembly"/>
    <property type="evidence" value="ECO:0007669"/>
    <property type="project" value="Ensembl"/>
</dbReference>
<dbReference type="GO" id="GO:0007507">
    <property type="term" value="P:heart development"/>
    <property type="evidence" value="ECO:0007669"/>
    <property type="project" value="Ensembl"/>
</dbReference>
<dbReference type="GO" id="GO:0048286">
    <property type="term" value="P:lung alveolus development"/>
    <property type="evidence" value="ECO:0007669"/>
    <property type="project" value="Ensembl"/>
</dbReference>
<dbReference type="GO" id="GO:0045596">
    <property type="term" value="P:negative regulation of cell differentiation"/>
    <property type="evidence" value="ECO:0007669"/>
    <property type="project" value="Ensembl"/>
</dbReference>
<dbReference type="GO" id="GO:0000122">
    <property type="term" value="P:negative regulation of transcription by RNA polymerase II"/>
    <property type="evidence" value="ECO:0007669"/>
    <property type="project" value="Ensembl"/>
</dbReference>
<dbReference type="GO" id="GO:1903598">
    <property type="term" value="P:positive regulation of gap junction assembly"/>
    <property type="evidence" value="ECO:0007669"/>
    <property type="project" value="Ensembl"/>
</dbReference>
<dbReference type="GO" id="GO:0043415">
    <property type="term" value="P:positive regulation of skeletal muscle tissue regeneration"/>
    <property type="evidence" value="ECO:0007669"/>
    <property type="project" value="Ensembl"/>
</dbReference>
<dbReference type="GO" id="GO:0051155">
    <property type="term" value="P:positive regulation of striated muscle cell differentiation"/>
    <property type="evidence" value="ECO:0007669"/>
    <property type="project" value="Ensembl"/>
</dbReference>
<dbReference type="GO" id="GO:0008016">
    <property type="term" value="P:regulation of heart contraction"/>
    <property type="evidence" value="ECO:0007669"/>
    <property type="project" value="Ensembl"/>
</dbReference>
<dbReference type="GO" id="GO:0006357">
    <property type="term" value="P:regulation of transcription by RNA polymerase II"/>
    <property type="evidence" value="ECO:0000318"/>
    <property type="project" value="GO_Central"/>
</dbReference>
<dbReference type="GO" id="GO:0001829">
    <property type="term" value="P:trophectodermal cell differentiation"/>
    <property type="evidence" value="ECO:0007669"/>
    <property type="project" value="Ensembl"/>
</dbReference>
<dbReference type="CDD" id="cd00086">
    <property type="entry name" value="homeodomain"/>
    <property type="match status" value="1"/>
</dbReference>
<dbReference type="FunFam" id="1.10.10.60:FF:000213">
    <property type="entry name" value="Homeodomain-only protein"/>
    <property type="match status" value="1"/>
</dbReference>
<dbReference type="Gene3D" id="1.10.10.60">
    <property type="entry name" value="Homeodomain-like"/>
    <property type="match status" value="1"/>
</dbReference>
<dbReference type="InterPro" id="IPR001356">
    <property type="entry name" value="HD"/>
</dbReference>
<dbReference type="InterPro" id="IPR009057">
    <property type="entry name" value="Homeodomain-like_sf"/>
</dbReference>
<dbReference type="InterPro" id="IPR039162">
    <property type="entry name" value="HOPX"/>
</dbReference>
<dbReference type="PANTHER" id="PTHR21408">
    <property type="entry name" value="HOMEODOMAIN-ONLY PROTEIN"/>
    <property type="match status" value="1"/>
</dbReference>
<dbReference type="PANTHER" id="PTHR21408:SF1">
    <property type="entry name" value="HOMEODOMAIN-ONLY PROTEIN"/>
    <property type="match status" value="1"/>
</dbReference>
<dbReference type="Pfam" id="PF00046">
    <property type="entry name" value="Homeodomain"/>
    <property type="match status" value="1"/>
</dbReference>
<dbReference type="SMART" id="SM00389">
    <property type="entry name" value="HOX"/>
    <property type="match status" value="1"/>
</dbReference>
<dbReference type="SUPFAM" id="SSF46689">
    <property type="entry name" value="Homeodomain-like"/>
    <property type="match status" value="1"/>
</dbReference>
<dbReference type="PROSITE" id="PS50071">
    <property type="entry name" value="HOMEOBOX_2"/>
    <property type="match status" value="1"/>
</dbReference>
<feature type="chain" id="PRO_0000049128" description="Homeodomain-only protein">
    <location>
        <begin position="1"/>
        <end position="73"/>
    </location>
</feature>
<feature type="DNA-binding region" description="Homeobox; degenerate" evidence="3">
    <location>
        <begin position="3"/>
        <end position="62"/>
    </location>
</feature>
<reference key="1">
    <citation type="journal article" date="2002" name="Mech. Dev.">
        <title>Expression of mOb1, a novel atypical 73 amino acid K50-homeodomain protein, during mouse development.</title>
        <authorList>
            <person name="Adu J."/>
            <person name="Leong F.T."/>
            <person name="Smith N.R."/>
            <person name="Leek J.P."/>
            <person name="Markham A.F."/>
            <person name="Robinson P.A."/>
            <person name="Mighell A.J."/>
        </authorList>
    </citation>
    <scope>NUCLEOTIDE SEQUENCE [MRNA]</scope>
    <source>
        <tissue>Heart</tissue>
    </source>
</reference>
<reference key="2">
    <citation type="submission" date="2005-08" db="EMBL/GenBank/DDBJ databases">
        <authorList>
            <consortium name="NIH - Mammalian Gene Collection (MGC) project"/>
        </authorList>
    </citation>
    <scope>NUCLEOTIDE SEQUENCE [LARGE SCALE MRNA]</scope>
    <source>
        <strain>Hereford</strain>
        <tissue>Testis</tissue>
    </source>
</reference>
<name>HOP_BOVIN</name>
<protein>
    <recommendedName>
        <fullName>Homeodomain-only protein</fullName>
    </recommendedName>
    <alternativeName>
        <fullName>Odd homeobox protein 1</fullName>
    </alternativeName>
</protein>
<comment type="function">
    <text evidence="1 2">Atypical homeodomain protein which does not bind DNA and is required to modulate cardiac growth and development. Acts via its interaction with SRF, thereby modulating the expression of SRF-dependent cardiac-specific genes and cardiac development. Prevents SRF-dependent transcription either by inhibiting SRF binding to DNA or by recruiting histone deacetylase (HDAC) proteins that prevent transcription by SRF. Overexpression causes cardiac hypertrophy. Acts as a co-chaperone for HSPA1A and HSPA1B chaperone proteins and assists in chaperone-mediated protein refolding.</text>
</comment>
<comment type="subunit">
    <text evidence="1 2">Interacts with serum response factor (SRF). Component of a large complex containing histone deacetylases such as HDAC2. Interacts with the acetylated forms of HSPA1A and HSPA1B. Interacts with HSPA8.</text>
</comment>
<comment type="subcellular location">
    <subcellularLocation>
        <location evidence="1">Nucleus</location>
    </subcellularLocation>
    <subcellularLocation>
        <location evidence="1">Cytoplasm</location>
    </subcellularLocation>
</comment>
<sequence>MSTETASGPTEDQVEILEYNFNKVNKHPDPTTLCLIAAEAGLSEEETQKWFKQRLAQWRRSEGLPSECRSVTD</sequence>
<gene>
    <name type="primary">HOPX</name>
    <name type="synonym">HOD</name>
    <name type="synonym">HOP</name>
    <name type="synonym">OB1</name>
</gene>
<proteinExistence type="inferred from homology"/>
<accession>Q8MJD5</accession>
<accession>Q3SZZ6</accession>
<evidence type="ECO:0000250" key="1">
    <source>
        <dbReference type="UniProtKB" id="Q8R1H0"/>
    </source>
</evidence>
<evidence type="ECO:0000250" key="2">
    <source>
        <dbReference type="UniProtKB" id="Q9BPY8"/>
    </source>
</evidence>
<evidence type="ECO:0000255" key="3">
    <source>
        <dbReference type="PROSITE-ProRule" id="PRU00108"/>
    </source>
</evidence>
<keyword id="KW-0963">Cytoplasm</keyword>
<keyword id="KW-0217">Developmental protein</keyword>
<keyword id="KW-0371">Homeobox</keyword>
<keyword id="KW-0539">Nucleus</keyword>
<keyword id="KW-1185">Reference proteome</keyword>
<keyword id="KW-0678">Repressor</keyword>
<keyword id="KW-0804">Transcription</keyword>
<keyword id="KW-0805">Transcription regulation</keyword>